<comment type="similarity">
    <text evidence="1">Belongs to the universal ribosomal protein uS2 family.</text>
</comment>
<reference key="1">
    <citation type="journal article" date="2011" name="Stand. Genomic Sci.">
        <title>Complete genome sequence of Parvibaculum lavamentivorans type strain (DS-1(T)).</title>
        <authorList>
            <person name="Schleheck D."/>
            <person name="Weiss M."/>
            <person name="Pitluck S."/>
            <person name="Bruce D."/>
            <person name="Land M.L."/>
            <person name="Han S."/>
            <person name="Saunders E."/>
            <person name="Tapia R."/>
            <person name="Detter C."/>
            <person name="Brettin T."/>
            <person name="Han J."/>
            <person name="Woyke T."/>
            <person name="Goodwin L."/>
            <person name="Pennacchio L."/>
            <person name="Nolan M."/>
            <person name="Cook A.M."/>
            <person name="Kjelleberg S."/>
            <person name="Thomas T."/>
        </authorList>
    </citation>
    <scope>NUCLEOTIDE SEQUENCE [LARGE SCALE GENOMIC DNA]</scope>
    <source>
        <strain>DS-1 / DSM 13023 / NCIMB 13966</strain>
    </source>
</reference>
<gene>
    <name evidence="1" type="primary">rpsB</name>
    <name type="ordered locus">Plav_3196</name>
</gene>
<protein>
    <recommendedName>
        <fullName evidence="1">Small ribosomal subunit protein uS2</fullName>
    </recommendedName>
    <alternativeName>
        <fullName evidence="2">30S ribosomal protein S2</fullName>
    </alternativeName>
</protein>
<sequence length="253" mass="27452">MALPDFSMRQLLEAGVHFGHQTHRWNPKMEPFLFGDRNNIHIIDLAQTVPLLHQALVTVRDVVAGGGRVLFVGTKRQASDPVAAAARQCAQYYINHRWLGGMLTNWKTISNSIRRLRQLDEMLAGEAKGLTKKEVLNLTRERDKLERAIGGIKDMGGLPDLIFVIDTNKEEIAIQEARKLGIAVVAILDSNSNPDGIAFPVPGNDDAARAISLYCDLVSRAVIDGISQSQSASGVDVGAEAEPAVEIPAAAEA</sequence>
<dbReference type="EMBL" id="CP000774">
    <property type="protein sequence ID" value="ABS64802.1"/>
    <property type="molecule type" value="Genomic_DNA"/>
</dbReference>
<dbReference type="RefSeq" id="WP_012112128.1">
    <property type="nucleotide sequence ID" value="NC_009719.1"/>
</dbReference>
<dbReference type="SMR" id="A7HY19"/>
<dbReference type="STRING" id="402881.Plav_3196"/>
<dbReference type="KEGG" id="pla:Plav_3196"/>
<dbReference type="eggNOG" id="COG0052">
    <property type="taxonomic scope" value="Bacteria"/>
</dbReference>
<dbReference type="HOGENOM" id="CLU_040318_2_1_5"/>
<dbReference type="OrthoDB" id="9808036at2"/>
<dbReference type="Proteomes" id="UP000006377">
    <property type="component" value="Chromosome"/>
</dbReference>
<dbReference type="GO" id="GO:0022627">
    <property type="term" value="C:cytosolic small ribosomal subunit"/>
    <property type="evidence" value="ECO:0007669"/>
    <property type="project" value="TreeGrafter"/>
</dbReference>
<dbReference type="GO" id="GO:0003735">
    <property type="term" value="F:structural constituent of ribosome"/>
    <property type="evidence" value="ECO:0007669"/>
    <property type="project" value="InterPro"/>
</dbReference>
<dbReference type="GO" id="GO:0006412">
    <property type="term" value="P:translation"/>
    <property type="evidence" value="ECO:0007669"/>
    <property type="project" value="UniProtKB-UniRule"/>
</dbReference>
<dbReference type="CDD" id="cd01425">
    <property type="entry name" value="RPS2"/>
    <property type="match status" value="1"/>
</dbReference>
<dbReference type="FunFam" id="1.10.287.610:FF:000001">
    <property type="entry name" value="30S ribosomal protein S2"/>
    <property type="match status" value="1"/>
</dbReference>
<dbReference type="Gene3D" id="3.40.50.10490">
    <property type="entry name" value="Glucose-6-phosphate isomerase like protein, domain 1"/>
    <property type="match status" value="1"/>
</dbReference>
<dbReference type="Gene3D" id="1.10.287.610">
    <property type="entry name" value="Helix hairpin bin"/>
    <property type="match status" value="1"/>
</dbReference>
<dbReference type="HAMAP" id="MF_00291_B">
    <property type="entry name" value="Ribosomal_uS2_B"/>
    <property type="match status" value="1"/>
</dbReference>
<dbReference type="InterPro" id="IPR001865">
    <property type="entry name" value="Ribosomal_uS2"/>
</dbReference>
<dbReference type="InterPro" id="IPR005706">
    <property type="entry name" value="Ribosomal_uS2_bac/mit/plastid"/>
</dbReference>
<dbReference type="InterPro" id="IPR018130">
    <property type="entry name" value="Ribosomal_uS2_CS"/>
</dbReference>
<dbReference type="InterPro" id="IPR023591">
    <property type="entry name" value="Ribosomal_uS2_flav_dom_sf"/>
</dbReference>
<dbReference type="NCBIfam" id="TIGR01011">
    <property type="entry name" value="rpsB_bact"/>
    <property type="match status" value="1"/>
</dbReference>
<dbReference type="PANTHER" id="PTHR12534">
    <property type="entry name" value="30S RIBOSOMAL PROTEIN S2 PROKARYOTIC AND ORGANELLAR"/>
    <property type="match status" value="1"/>
</dbReference>
<dbReference type="PANTHER" id="PTHR12534:SF0">
    <property type="entry name" value="SMALL RIBOSOMAL SUBUNIT PROTEIN US2M"/>
    <property type="match status" value="1"/>
</dbReference>
<dbReference type="Pfam" id="PF00318">
    <property type="entry name" value="Ribosomal_S2"/>
    <property type="match status" value="1"/>
</dbReference>
<dbReference type="PRINTS" id="PR00395">
    <property type="entry name" value="RIBOSOMALS2"/>
</dbReference>
<dbReference type="SUPFAM" id="SSF52313">
    <property type="entry name" value="Ribosomal protein S2"/>
    <property type="match status" value="1"/>
</dbReference>
<dbReference type="PROSITE" id="PS00962">
    <property type="entry name" value="RIBOSOMAL_S2_1"/>
    <property type="match status" value="1"/>
</dbReference>
<dbReference type="PROSITE" id="PS00963">
    <property type="entry name" value="RIBOSOMAL_S2_2"/>
    <property type="match status" value="1"/>
</dbReference>
<name>RS2_PARL1</name>
<keyword id="KW-1185">Reference proteome</keyword>
<keyword id="KW-0687">Ribonucleoprotein</keyword>
<keyword id="KW-0689">Ribosomal protein</keyword>
<proteinExistence type="inferred from homology"/>
<organism>
    <name type="scientific">Parvibaculum lavamentivorans (strain DS-1 / DSM 13023 / NCIMB 13966)</name>
    <dbReference type="NCBI Taxonomy" id="402881"/>
    <lineage>
        <taxon>Bacteria</taxon>
        <taxon>Pseudomonadati</taxon>
        <taxon>Pseudomonadota</taxon>
        <taxon>Alphaproteobacteria</taxon>
        <taxon>Hyphomicrobiales</taxon>
        <taxon>Parvibaculaceae</taxon>
        <taxon>Parvibaculum</taxon>
    </lineage>
</organism>
<evidence type="ECO:0000255" key="1">
    <source>
        <dbReference type="HAMAP-Rule" id="MF_00291"/>
    </source>
</evidence>
<evidence type="ECO:0000305" key="2"/>
<feature type="chain" id="PRO_1000071950" description="Small ribosomal subunit protein uS2">
    <location>
        <begin position="1"/>
        <end position="253"/>
    </location>
</feature>
<accession>A7HY19</accession>